<feature type="chain" id="PRO_0000182768" description="NADP-specific glutamate dehydrogenase">
    <location>
        <begin position="1"/>
        <end position="447"/>
    </location>
</feature>
<feature type="active site" description="Proton donor" evidence="2">
    <location>
        <position position="128"/>
    </location>
</feature>
<feature type="binding site" evidence="1">
    <location>
        <position position="92"/>
    </location>
    <ligand>
        <name>substrate</name>
    </ligand>
</feature>
<feature type="binding site" evidence="1">
    <location>
        <position position="113"/>
    </location>
    <ligand>
        <name>substrate</name>
    </ligand>
</feature>
<feature type="binding site" evidence="1">
    <location>
        <position position="116"/>
    </location>
    <ligand>
        <name>substrate</name>
    </ligand>
</feature>
<feature type="binding site" evidence="1">
    <location>
        <position position="167"/>
    </location>
    <ligand>
        <name>substrate</name>
    </ligand>
</feature>
<feature type="binding site" evidence="1">
    <location>
        <position position="212"/>
    </location>
    <ligand>
        <name>NADP(+)</name>
        <dbReference type="ChEBI" id="CHEBI:58349"/>
    </ligand>
</feature>
<feature type="binding site" evidence="1">
    <location>
        <position position="243"/>
    </location>
    <ligand>
        <name>NADP(+)</name>
        <dbReference type="ChEBI" id="CHEBI:58349"/>
    </ligand>
</feature>
<feature type="binding site" evidence="1">
    <location>
        <position position="379"/>
    </location>
    <ligand>
        <name>substrate</name>
    </ligand>
</feature>
<feature type="site" description="Important for catalysis" evidence="1">
    <location>
        <position position="168"/>
    </location>
</feature>
<feature type="sequence conflict" description="In Ref. 1; CAA42048." evidence="3" ref="1">
    <original>I</original>
    <variation>L</variation>
    <location>
        <position position="37"/>
    </location>
</feature>
<feature type="sequence conflict" description="In Ref. 1; CAA42048." evidence="3" ref="1">
    <original>ANAGGVATSALEMQQNASRDSWSFEYTDERLQVIMKNIFK</original>
    <variation>TPEAVEVFRERDIRFGPGKAVNVGGVATSALEMQQNASRE</variation>
    <location>
        <begin position="371"/>
        <end position="410"/>
    </location>
</feature>
<feature type="helix" evidence="4">
    <location>
        <begin position="3"/>
        <end position="17"/>
    </location>
</feature>
<feature type="turn" evidence="4">
    <location>
        <begin position="18"/>
        <end position="20"/>
    </location>
</feature>
<feature type="helix" evidence="4">
    <location>
        <begin position="22"/>
        <end position="41"/>
    </location>
</feature>
<feature type="helix" evidence="4">
    <location>
        <begin position="43"/>
        <end position="49"/>
    </location>
</feature>
<feature type="helix" evidence="4">
    <location>
        <begin position="50"/>
        <end position="54"/>
    </location>
</feature>
<feature type="strand" evidence="4">
    <location>
        <begin position="58"/>
        <end position="68"/>
    </location>
</feature>
<feature type="strand" evidence="4">
    <location>
        <begin position="74"/>
        <end position="85"/>
    </location>
</feature>
<feature type="strand" evidence="4">
    <location>
        <begin position="87"/>
        <end position="92"/>
    </location>
</feature>
<feature type="strand" evidence="4">
    <location>
        <begin position="95"/>
        <end position="97"/>
    </location>
</feature>
<feature type="helix" evidence="4">
    <location>
        <begin position="103"/>
        <end position="119"/>
    </location>
</feature>
<feature type="strand" evidence="4">
    <location>
        <begin position="121"/>
        <end position="123"/>
    </location>
</feature>
<feature type="strand" evidence="4">
    <location>
        <begin position="126"/>
        <end position="132"/>
    </location>
</feature>
<feature type="helix" evidence="4">
    <location>
        <begin position="140"/>
        <end position="154"/>
    </location>
</feature>
<feature type="helix" evidence="4">
    <location>
        <begin position="155"/>
        <end position="157"/>
    </location>
</feature>
<feature type="turn" evidence="4">
    <location>
        <begin position="160"/>
        <end position="162"/>
    </location>
</feature>
<feature type="helix" evidence="4">
    <location>
        <begin position="173"/>
        <end position="187"/>
    </location>
</feature>
<feature type="helix" evidence="4">
    <location>
        <begin position="192"/>
        <end position="194"/>
    </location>
</feature>
<feature type="turn" evidence="4">
    <location>
        <begin position="200"/>
        <end position="203"/>
    </location>
</feature>
<feature type="turn" evidence="4">
    <location>
        <begin position="206"/>
        <end position="210"/>
    </location>
</feature>
<feature type="helix" evidence="4">
    <location>
        <begin position="211"/>
        <end position="226"/>
    </location>
</feature>
<feature type="strand" evidence="4">
    <location>
        <begin position="235"/>
        <end position="239"/>
    </location>
</feature>
<feature type="helix" evidence="4">
    <location>
        <begin position="243"/>
        <end position="254"/>
    </location>
</feature>
<feature type="strand" evidence="4">
    <location>
        <begin position="258"/>
        <end position="263"/>
    </location>
</feature>
<feature type="strand" evidence="4">
    <location>
        <begin position="268"/>
        <end position="270"/>
    </location>
</feature>
<feature type="helix" evidence="4">
    <location>
        <begin position="277"/>
        <end position="285"/>
    </location>
</feature>
<feature type="helix" evidence="4">
    <location>
        <begin position="291"/>
        <end position="297"/>
    </location>
</feature>
<feature type="strand" evidence="4">
    <location>
        <begin position="302"/>
        <end position="307"/>
    </location>
</feature>
<feature type="helix" evidence="4">
    <location>
        <begin position="309"/>
        <end position="311"/>
    </location>
</feature>
<feature type="strand" evidence="4">
    <location>
        <begin position="315"/>
        <end position="319"/>
    </location>
</feature>
<feature type="helix" evidence="4">
    <location>
        <begin position="328"/>
        <end position="336"/>
    </location>
</feature>
<feature type="strand" evidence="4">
    <location>
        <begin position="341"/>
        <end position="343"/>
    </location>
</feature>
<feature type="strand" evidence="4">
    <location>
        <begin position="345"/>
        <end position="348"/>
    </location>
</feature>
<feature type="helix" evidence="4">
    <location>
        <begin position="352"/>
        <end position="360"/>
    </location>
</feature>
<feature type="strand" evidence="4">
    <location>
        <begin position="364"/>
        <end position="366"/>
    </location>
</feature>
<feature type="helix" evidence="4">
    <location>
        <begin position="368"/>
        <end position="371"/>
    </location>
</feature>
<feature type="helix" evidence="4">
    <location>
        <begin position="374"/>
        <end position="388"/>
    </location>
</feature>
<feature type="helix" evidence="4">
    <location>
        <begin position="394"/>
        <end position="418"/>
    </location>
</feature>
<feature type="helix" evidence="4">
    <location>
        <begin position="425"/>
        <end position="444"/>
    </location>
</feature>
<evidence type="ECO:0000250" key="1"/>
<evidence type="ECO:0000255" key="2">
    <source>
        <dbReference type="PROSITE-ProRule" id="PRU10011"/>
    </source>
</evidence>
<evidence type="ECO:0000305" key="3"/>
<evidence type="ECO:0007829" key="4">
    <source>
        <dbReference type="PDB" id="5IJZ"/>
    </source>
</evidence>
<proteinExistence type="evidence at protein level"/>
<name>DHE4_CORGL</name>
<organism>
    <name type="scientific">Corynebacterium glutamicum (strain ATCC 13032 / DSM 20300 / JCM 1318 / BCRC 11384 / CCUG 27702 / LMG 3730 / NBRC 12168 / NCIMB 10025 / NRRL B-2784 / 534)</name>
    <dbReference type="NCBI Taxonomy" id="196627"/>
    <lineage>
        <taxon>Bacteria</taxon>
        <taxon>Bacillati</taxon>
        <taxon>Actinomycetota</taxon>
        <taxon>Actinomycetes</taxon>
        <taxon>Mycobacteriales</taxon>
        <taxon>Corynebacteriaceae</taxon>
        <taxon>Corynebacterium</taxon>
    </lineage>
</organism>
<reference key="1">
    <citation type="journal article" date="1992" name="Mol. Microbiol.">
        <title>Molecular analysis of the Corynebacterium glutamicum gdh gene encoding glutamate dehydrogenase.</title>
        <authorList>
            <person name="Boermann E.R."/>
            <person name="Eikmanns B.J."/>
            <person name="Sahm H."/>
        </authorList>
    </citation>
    <scope>NUCLEOTIDE SEQUENCE [GENOMIC DNA]</scope>
    <source>
        <strain>ATCC 13032 / DSM 20300 / JCM 1318 / BCRC 11384 / CCUG 27702 / LMG 3730 / NBRC 12168 / NCIMB 10025 / NRRL B-2784 / 534</strain>
    </source>
</reference>
<reference key="2">
    <citation type="submission" date="1993-03" db="EMBL/GenBank/DDBJ databases">
        <authorList>
            <person name="Guyonvarch A."/>
            <person name="David F."/>
            <person name="Leblon G."/>
        </authorList>
    </citation>
    <scope>NUCLEOTIDE SEQUENCE [GENOMIC DNA]</scope>
</reference>
<reference key="3">
    <citation type="journal article" date="2003" name="Appl. Microbiol. Biotechnol.">
        <title>The Corynebacterium glutamicum genome: features and impacts on biotechnological processes.</title>
        <authorList>
            <person name="Ikeda M."/>
            <person name="Nakagawa S."/>
        </authorList>
    </citation>
    <scope>NUCLEOTIDE SEQUENCE [LARGE SCALE GENOMIC DNA]</scope>
    <source>
        <strain>ATCC 13032 / DSM 20300 / JCM 1318 / BCRC 11384 / CCUG 27702 / LMG 3730 / NBRC 12168 / NCIMB 10025 / NRRL B-2784 / 534</strain>
    </source>
</reference>
<reference key="4">
    <citation type="journal article" date="2003" name="J. Biotechnol.">
        <title>The complete Corynebacterium glutamicum ATCC 13032 genome sequence and its impact on the production of L-aspartate-derived amino acids and vitamins.</title>
        <authorList>
            <person name="Kalinowski J."/>
            <person name="Bathe B."/>
            <person name="Bartels D."/>
            <person name="Bischoff N."/>
            <person name="Bott M."/>
            <person name="Burkovski A."/>
            <person name="Dusch N."/>
            <person name="Eggeling L."/>
            <person name="Eikmanns B.J."/>
            <person name="Gaigalat L."/>
            <person name="Goesmann A."/>
            <person name="Hartmann M."/>
            <person name="Huthmacher K."/>
            <person name="Kraemer R."/>
            <person name="Linke B."/>
            <person name="McHardy A.C."/>
            <person name="Meyer F."/>
            <person name="Moeckel B."/>
            <person name="Pfefferle W."/>
            <person name="Puehler A."/>
            <person name="Rey D.A."/>
            <person name="Rueckert C."/>
            <person name="Rupp O."/>
            <person name="Sahm H."/>
            <person name="Wendisch V.F."/>
            <person name="Wiegraebe I."/>
            <person name="Tauch A."/>
        </authorList>
    </citation>
    <scope>NUCLEOTIDE SEQUENCE [LARGE SCALE GENOMIC DNA]</scope>
    <source>
        <strain>ATCC 13032 / DSM 20300 / JCM 1318 / BCRC 11384 / CCUG 27702 / LMG 3730 / NBRC 12168 / NCIMB 10025 / NRRL B-2784 / 534</strain>
    </source>
</reference>
<sequence>MTVDEQVSNYYDMLLKRNAGEPEFHQAVAEVLESLKIVLEKDPHYADYGLIQRLCEPERQLIFRVPWVDDQGQVHVNRGFRVQFNSALGPYKGGLRFHPSVNLGIVKFLGFEQIFKNSLTGLPIGGGKGGSDFDPKGKSDLEIMRFCQSFMTELHRHIGEYRDVPAGDIGVGGREIGYLFGHYRRMANQHESGVLTGKGLTWGGSLVRTEATGYGCVYFVSEMIKAKGESISGQKIIVSGSGNVATYAIEKAQELGATVIGFSDSSGWVHTPNGVDVAKLREIKEVRRARVSVYADEVEGATYHTDGSIWDLKCDIALPCATQNELNGENAKTLADNGCRFVAEGANMPSTPEAVEVFRERDIRFGPGKAANAGGVATSALEMQQNASRDSWSFEYTDERLQVIMKNIFKTCAETAAEYGHENDYVVGANIAGFKKVADAMLAQGVI</sequence>
<keyword id="KW-0002">3D-structure</keyword>
<keyword id="KW-0521">NADP</keyword>
<keyword id="KW-0560">Oxidoreductase</keyword>
<keyword id="KW-1185">Reference proteome</keyword>
<accession>P31026</accession>
<dbReference type="EC" id="1.4.1.4"/>
<dbReference type="EMBL" id="X59404">
    <property type="protein sequence ID" value="CAA42048.2"/>
    <property type="molecule type" value="Genomic_DNA"/>
</dbReference>
<dbReference type="EMBL" id="X72855">
    <property type="protein sequence ID" value="CAA51376.1"/>
    <property type="molecule type" value="Genomic_DNA"/>
</dbReference>
<dbReference type="EMBL" id="BA000036">
    <property type="protein sequence ID" value="BAB99472.1"/>
    <property type="molecule type" value="Genomic_DNA"/>
</dbReference>
<dbReference type="EMBL" id="BX927154">
    <property type="protein sequence ID" value="CAF20415.1"/>
    <property type="molecule type" value="Genomic_DNA"/>
</dbReference>
<dbReference type="PIR" id="S32227">
    <property type="entry name" value="S32227"/>
</dbReference>
<dbReference type="RefSeq" id="NP_601279.1">
    <property type="nucleotide sequence ID" value="NC_003450.3"/>
</dbReference>
<dbReference type="PDB" id="5IJZ">
    <property type="method" value="X-ray"/>
    <property type="resolution" value="2.29 A"/>
    <property type="chains" value="A/B/C/D/E/F/G/H/I/J/K/L=1-447"/>
</dbReference>
<dbReference type="PDBsum" id="5IJZ"/>
<dbReference type="SMR" id="P31026"/>
<dbReference type="STRING" id="196627.cg2280"/>
<dbReference type="KEGG" id="cgb:cg2280"/>
<dbReference type="KEGG" id="cgl:Cgl2079"/>
<dbReference type="PATRIC" id="fig|196627.13.peg.2015"/>
<dbReference type="eggNOG" id="COG0334">
    <property type="taxonomic scope" value="Bacteria"/>
</dbReference>
<dbReference type="HOGENOM" id="CLU_025763_2_1_11"/>
<dbReference type="OrthoDB" id="9803297at2"/>
<dbReference type="BioCyc" id="CORYNE:G18NG-11671-MONOMER"/>
<dbReference type="BRENDA" id="1.4.1.4">
    <property type="organism ID" value="960"/>
</dbReference>
<dbReference type="EvolutionaryTrace" id="P31026"/>
<dbReference type="Proteomes" id="UP000000582">
    <property type="component" value="Chromosome"/>
</dbReference>
<dbReference type="Proteomes" id="UP000001009">
    <property type="component" value="Chromosome"/>
</dbReference>
<dbReference type="GO" id="GO:0005737">
    <property type="term" value="C:cytoplasm"/>
    <property type="evidence" value="ECO:0000250"/>
    <property type="project" value="UniProtKB"/>
</dbReference>
<dbReference type="GO" id="GO:0005829">
    <property type="term" value="C:cytosol"/>
    <property type="evidence" value="ECO:0007669"/>
    <property type="project" value="TreeGrafter"/>
</dbReference>
<dbReference type="GO" id="GO:0004354">
    <property type="term" value="F:glutamate dehydrogenase (NADP+) activity"/>
    <property type="evidence" value="ECO:0000250"/>
    <property type="project" value="UniProtKB"/>
</dbReference>
<dbReference type="GO" id="GO:0006537">
    <property type="term" value="P:glutamate biosynthetic process"/>
    <property type="evidence" value="ECO:0000250"/>
    <property type="project" value="UniProtKB"/>
</dbReference>
<dbReference type="CDD" id="cd05313">
    <property type="entry name" value="NAD_bind_2_Glu_DH"/>
    <property type="match status" value="1"/>
</dbReference>
<dbReference type="FunFam" id="1.10.285.10:FF:000001">
    <property type="entry name" value="Glutamate dehydrogenase"/>
    <property type="match status" value="1"/>
</dbReference>
<dbReference type="FunFam" id="1.10.285.10:FF:000008">
    <property type="entry name" value="Glutamate dehydrogenase"/>
    <property type="match status" value="1"/>
</dbReference>
<dbReference type="FunFam" id="3.40.50.10860:FF:000002">
    <property type="entry name" value="Glutamate dehydrogenase"/>
    <property type="match status" value="1"/>
</dbReference>
<dbReference type="FunFam" id="3.40.50.720:FF:000030">
    <property type="entry name" value="Glutamate dehydrogenase"/>
    <property type="match status" value="1"/>
</dbReference>
<dbReference type="Gene3D" id="1.10.285.10">
    <property type="entry name" value="Glutamate Dehydrogenase, chain A, domain 3"/>
    <property type="match status" value="2"/>
</dbReference>
<dbReference type="Gene3D" id="3.40.50.10860">
    <property type="entry name" value="Leucine Dehydrogenase, chain A, domain 1"/>
    <property type="match status" value="1"/>
</dbReference>
<dbReference type="Gene3D" id="3.40.50.720">
    <property type="entry name" value="NAD(P)-binding Rossmann-like Domain"/>
    <property type="match status" value="1"/>
</dbReference>
<dbReference type="InterPro" id="IPR046346">
    <property type="entry name" value="Aminoacid_DH-like_N_sf"/>
</dbReference>
<dbReference type="InterPro" id="IPR006095">
    <property type="entry name" value="Glu/Leu/Phe/Val/Trp_DH"/>
</dbReference>
<dbReference type="InterPro" id="IPR006096">
    <property type="entry name" value="Glu/Leu/Phe/Val/Trp_DH_C"/>
</dbReference>
<dbReference type="InterPro" id="IPR006097">
    <property type="entry name" value="Glu/Leu/Phe/Val/Trp_DH_dimer"/>
</dbReference>
<dbReference type="InterPro" id="IPR033524">
    <property type="entry name" value="Glu/Leu/Phe/Val_DH_AS"/>
</dbReference>
<dbReference type="InterPro" id="IPR014362">
    <property type="entry name" value="Glu_DH"/>
</dbReference>
<dbReference type="InterPro" id="IPR050724">
    <property type="entry name" value="Glu_Leu_Phe_Val_DH"/>
</dbReference>
<dbReference type="InterPro" id="IPR036291">
    <property type="entry name" value="NAD(P)-bd_dom_sf"/>
</dbReference>
<dbReference type="InterPro" id="IPR033922">
    <property type="entry name" value="NAD_bind_Glu_DH"/>
</dbReference>
<dbReference type="NCBIfam" id="NF006929">
    <property type="entry name" value="PRK09414.1"/>
    <property type="match status" value="1"/>
</dbReference>
<dbReference type="PANTHER" id="PTHR43571">
    <property type="entry name" value="NADP-SPECIFIC GLUTAMATE DEHYDROGENASE 1-RELATED"/>
    <property type="match status" value="1"/>
</dbReference>
<dbReference type="PANTHER" id="PTHR43571:SF1">
    <property type="entry name" value="NADP-SPECIFIC GLUTAMATE DEHYDROGENASE 1-RELATED"/>
    <property type="match status" value="1"/>
</dbReference>
<dbReference type="Pfam" id="PF00208">
    <property type="entry name" value="ELFV_dehydrog"/>
    <property type="match status" value="1"/>
</dbReference>
<dbReference type="Pfam" id="PF02812">
    <property type="entry name" value="ELFV_dehydrog_N"/>
    <property type="match status" value="1"/>
</dbReference>
<dbReference type="PIRSF" id="PIRSF000185">
    <property type="entry name" value="Glu_DH"/>
    <property type="match status" value="1"/>
</dbReference>
<dbReference type="PRINTS" id="PR00082">
    <property type="entry name" value="GLFDHDRGNASE"/>
</dbReference>
<dbReference type="SMART" id="SM00839">
    <property type="entry name" value="ELFV_dehydrog"/>
    <property type="match status" value="1"/>
</dbReference>
<dbReference type="SUPFAM" id="SSF53223">
    <property type="entry name" value="Aminoacid dehydrogenase-like, N-terminal domain"/>
    <property type="match status" value="1"/>
</dbReference>
<dbReference type="SUPFAM" id="SSF51735">
    <property type="entry name" value="NAD(P)-binding Rossmann-fold domains"/>
    <property type="match status" value="1"/>
</dbReference>
<dbReference type="PROSITE" id="PS00074">
    <property type="entry name" value="GLFV_DEHYDROGENASE"/>
    <property type="match status" value="1"/>
</dbReference>
<protein>
    <recommendedName>
        <fullName>NADP-specific glutamate dehydrogenase</fullName>
        <shortName>NADP-GDH</shortName>
        <ecNumber>1.4.1.4</ecNumber>
    </recommendedName>
</protein>
<gene>
    <name type="primary">gdh</name>
    <name type="ordered locus">Cgl2079</name>
    <name type="ordered locus">cg2280</name>
</gene>
<comment type="function">
    <text evidence="1">Catalyzes the reversible oxidative deamination of glutamate to alpha-ketoglutarate and ammonia.</text>
</comment>
<comment type="catalytic activity">
    <reaction>
        <text>L-glutamate + NADP(+) + H2O = 2-oxoglutarate + NH4(+) + NADPH + H(+)</text>
        <dbReference type="Rhea" id="RHEA:11612"/>
        <dbReference type="ChEBI" id="CHEBI:15377"/>
        <dbReference type="ChEBI" id="CHEBI:15378"/>
        <dbReference type="ChEBI" id="CHEBI:16810"/>
        <dbReference type="ChEBI" id="CHEBI:28938"/>
        <dbReference type="ChEBI" id="CHEBI:29985"/>
        <dbReference type="ChEBI" id="CHEBI:57783"/>
        <dbReference type="ChEBI" id="CHEBI:58349"/>
        <dbReference type="EC" id="1.4.1.4"/>
    </reaction>
</comment>
<comment type="subunit">
    <text evidence="1">Homohexamer.</text>
</comment>
<comment type="similarity">
    <text evidence="3">Belongs to the Glu/Leu/Phe/Val dehydrogenases family.</text>
</comment>